<keyword id="KW-1003">Cell membrane</keyword>
<keyword id="KW-0963">Cytoplasm</keyword>
<keyword id="KW-0206">Cytoskeleton</keyword>
<keyword id="KW-0472">Membrane</keyword>
<keyword id="KW-1185">Reference proteome</keyword>
<protein>
    <recommendedName>
        <fullName>Amyloid beta A4 precursor protein-binding family B member 1-interacting protein</fullName>
    </recommendedName>
    <alternativeName>
        <fullName>APBB1-interacting protein 1</fullName>
    </alternativeName>
</protein>
<evidence type="ECO:0000250" key="1"/>
<evidence type="ECO:0000255" key="2">
    <source>
        <dbReference type="PROSITE-ProRule" id="PRU00145"/>
    </source>
</evidence>
<evidence type="ECO:0000255" key="3">
    <source>
        <dbReference type="PROSITE-ProRule" id="PRU00166"/>
    </source>
</evidence>
<evidence type="ECO:0000256" key="4">
    <source>
        <dbReference type="SAM" id="MobiDB-lite"/>
    </source>
</evidence>
<evidence type="ECO:0000305" key="5"/>
<dbReference type="EMBL" id="BC077889">
    <property type="protein sequence ID" value="AAH77889.1"/>
    <property type="status" value="ALT_INIT"/>
    <property type="molecule type" value="mRNA"/>
</dbReference>
<dbReference type="RefSeq" id="NP_001087106.2">
    <property type="nucleotide sequence ID" value="NM_001093637.1"/>
</dbReference>
<dbReference type="SMR" id="Q6DCV1"/>
<dbReference type="GeneID" id="446995"/>
<dbReference type="KEGG" id="xla:446995"/>
<dbReference type="AGR" id="Xenbase:XB-GENE-950414"/>
<dbReference type="CTD" id="446995"/>
<dbReference type="Xenbase" id="XB-GENE-950414">
    <property type="gene designation" value="apbb1ip.S"/>
</dbReference>
<dbReference type="OrthoDB" id="6235964at2759"/>
<dbReference type="Proteomes" id="UP000186698">
    <property type="component" value="Chromosome 6S"/>
</dbReference>
<dbReference type="Bgee" id="446995">
    <property type="expression patterns" value="Expressed in spleen and 16 other cell types or tissues"/>
</dbReference>
<dbReference type="GO" id="GO:0005856">
    <property type="term" value="C:cytoskeleton"/>
    <property type="evidence" value="ECO:0007669"/>
    <property type="project" value="UniProtKB-SubCell"/>
</dbReference>
<dbReference type="GO" id="GO:0005829">
    <property type="term" value="C:cytosol"/>
    <property type="evidence" value="ECO:0000318"/>
    <property type="project" value="GO_Central"/>
</dbReference>
<dbReference type="GO" id="GO:0005886">
    <property type="term" value="C:plasma membrane"/>
    <property type="evidence" value="ECO:0000318"/>
    <property type="project" value="GO_Central"/>
</dbReference>
<dbReference type="GO" id="GO:0007165">
    <property type="term" value="P:signal transduction"/>
    <property type="evidence" value="ECO:0007669"/>
    <property type="project" value="InterPro"/>
</dbReference>
<dbReference type="CDD" id="cd01259">
    <property type="entry name" value="PH_APBB1IP"/>
    <property type="match status" value="1"/>
</dbReference>
<dbReference type="CDD" id="cd16137">
    <property type="entry name" value="RA_MRL_RIAM"/>
    <property type="match status" value="1"/>
</dbReference>
<dbReference type="FunFam" id="2.30.29.30:FF:000048">
    <property type="entry name" value="Ras association (RalGDS/AF-6) and pleckstrin homology domains 1"/>
    <property type="match status" value="1"/>
</dbReference>
<dbReference type="Gene3D" id="3.10.20.90">
    <property type="entry name" value="Phosphatidylinositol 3-kinase Catalytic Subunit, Chain A, domain 1"/>
    <property type="match status" value="1"/>
</dbReference>
<dbReference type="Gene3D" id="2.30.29.30">
    <property type="entry name" value="Pleckstrin-homology domain (PH domain)/Phosphotyrosine-binding domain (PTB)"/>
    <property type="match status" value="1"/>
</dbReference>
<dbReference type="InterPro" id="IPR039664">
    <property type="entry name" value="GRB/APBB1IP"/>
</dbReference>
<dbReference type="InterPro" id="IPR011993">
    <property type="entry name" value="PH-like_dom_sf"/>
</dbReference>
<dbReference type="InterPro" id="IPR039665">
    <property type="entry name" value="PH_APBB1IP"/>
</dbReference>
<dbReference type="InterPro" id="IPR001849">
    <property type="entry name" value="PH_domain"/>
</dbReference>
<dbReference type="InterPro" id="IPR000159">
    <property type="entry name" value="RA_dom"/>
</dbReference>
<dbReference type="InterPro" id="IPR029071">
    <property type="entry name" value="Ubiquitin-like_domsf"/>
</dbReference>
<dbReference type="PANTHER" id="PTHR11243:SF14">
    <property type="entry name" value="AMYLOID BETA A4 PRECURSOR PROTEIN-BINDING FAMILY B MEMBER 1-INTERACTING PROTEIN"/>
    <property type="match status" value="1"/>
</dbReference>
<dbReference type="PANTHER" id="PTHR11243">
    <property type="entry name" value="GROWTH FACTOR RECEPTOR-BOUND PROTEIN"/>
    <property type="match status" value="1"/>
</dbReference>
<dbReference type="Pfam" id="PF00169">
    <property type="entry name" value="PH"/>
    <property type="match status" value="1"/>
</dbReference>
<dbReference type="Pfam" id="PF21989">
    <property type="entry name" value="RA_2"/>
    <property type="match status" value="1"/>
</dbReference>
<dbReference type="PRINTS" id="PR01217">
    <property type="entry name" value="PRICHEXTENSN"/>
</dbReference>
<dbReference type="SMART" id="SM00233">
    <property type="entry name" value="PH"/>
    <property type="match status" value="1"/>
</dbReference>
<dbReference type="SMART" id="SM00314">
    <property type="entry name" value="RA"/>
    <property type="match status" value="1"/>
</dbReference>
<dbReference type="SUPFAM" id="SSF50729">
    <property type="entry name" value="PH domain-like"/>
    <property type="match status" value="1"/>
</dbReference>
<dbReference type="SUPFAM" id="SSF54236">
    <property type="entry name" value="Ubiquitin-like"/>
    <property type="match status" value="1"/>
</dbReference>
<dbReference type="PROSITE" id="PS50003">
    <property type="entry name" value="PH_DOMAIN"/>
    <property type="match status" value="1"/>
</dbReference>
<dbReference type="PROSITE" id="PS50200">
    <property type="entry name" value="RA"/>
    <property type="match status" value="1"/>
</dbReference>
<gene>
    <name type="primary">apbb1ip</name>
</gene>
<name>AB1IP_XENLA</name>
<reference key="1">
    <citation type="submission" date="2004-07" db="EMBL/GenBank/DDBJ databases">
        <authorList>
            <consortium name="NIH - Xenopus Gene Collection (XGC) project"/>
        </authorList>
    </citation>
    <scope>NUCLEOTIDE SEQUENCE [LARGE SCALE MRNA]</scope>
    <source>
        <tissue>Spleen</tissue>
    </source>
</reference>
<feature type="chain" id="PRO_0000181351" description="Amyloid beta A4 precursor protein-binding family B member 1-interacting protein">
    <location>
        <begin position="1"/>
        <end position="653"/>
    </location>
</feature>
<feature type="domain" description="Ras-associating" evidence="3">
    <location>
        <begin position="165"/>
        <end position="253"/>
    </location>
</feature>
<feature type="domain" description="PH" evidence="2">
    <location>
        <begin position="295"/>
        <end position="404"/>
    </location>
</feature>
<feature type="region of interest" description="Disordered" evidence="4">
    <location>
        <begin position="82"/>
        <end position="141"/>
    </location>
</feature>
<feature type="region of interest" description="Disordered" evidence="4">
    <location>
        <begin position="462"/>
        <end position="653"/>
    </location>
</feature>
<feature type="compositionally biased region" description="Pro residues" evidence="4">
    <location>
        <begin position="116"/>
        <end position="134"/>
    </location>
</feature>
<feature type="compositionally biased region" description="Basic and acidic residues" evidence="4">
    <location>
        <begin position="462"/>
        <end position="481"/>
    </location>
</feature>
<feature type="compositionally biased region" description="Pro residues" evidence="4">
    <location>
        <begin position="585"/>
        <end position="604"/>
    </location>
</feature>
<feature type="compositionally biased region" description="Basic residues" evidence="4">
    <location>
        <begin position="605"/>
        <end position="614"/>
    </location>
</feature>
<accession>Q6DCV1</accession>
<organism>
    <name type="scientific">Xenopus laevis</name>
    <name type="common">African clawed frog</name>
    <dbReference type="NCBI Taxonomy" id="8355"/>
    <lineage>
        <taxon>Eukaryota</taxon>
        <taxon>Metazoa</taxon>
        <taxon>Chordata</taxon>
        <taxon>Craniata</taxon>
        <taxon>Vertebrata</taxon>
        <taxon>Euteleostomi</taxon>
        <taxon>Amphibia</taxon>
        <taxon>Batrachia</taxon>
        <taxon>Anura</taxon>
        <taxon>Pipoidea</taxon>
        <taxon>Pipidae</taxon>
        <taxon>Xenopodinae</taxon>
        <taxon>Xenopus</taxon>
        <taxon>Xenopus</taxon>
    </lineage>
</organism>
<proteinExistence type="evidence at transcript level"/>
<sequence length="653" mass="72681">MDEIDEMFSNLLGEMDLLTQSLEIETLPPPTRSASTTEINFSVGFKDLNESLNALEDNDLDALMAELVADITDAEQNVATYNNKSTAPFPPADASNSYHFHPPPMPSIITEDLSLLPPPPEFDPHYPPPPPDPLTEPKTQEELESKAKANKINLALSKMKEAKVKKRIVKVHMIDSSTKTLMVEEHQTVRDVLDNLFEKTHCDCSIEWCLFEVTPELQIERFFEDHENIVEILANWTRDSVNTIHFLEKNEKYAVFKKPQNFYMATKGSADLKDMNEKNKVSLLEQSFCGASVTVPELEAALYLKEDGKKSWKKRYFLLRASGIYYVPKGKTKTSRDLACFVQFDNVNVYYGTQYRMKYKAPTDHCFVLKHPQIQKESQYIKYLCCEDPWLLHQWVTGIRIAKYGKILYDNYKTAVQRGGLASHWSTLGSSSVSTAAGSSQGNGQICQNVTTISSSFSDAWKHGEANKQEKKSSEVNKPETKSATPTVTKRPPPTPRRASSISRVTDHPAFPPKPKAINTDIMSGPPQFPPPEPLQPADDFLPPPPPDFFDAPPDFLPPSPPSFMSNAENPPPPPVTQLQMSNAPAPPPPPPPPAPAANVPPLPVKKHPPKPPKRQSIVGPMPGTNAHGGAGGQPDFMSDLMKALQKKREPPT</sequence>
<comment type="function">
    <text>Appears to function in the signal transduction from Ras activation to actin cytoskeletal remodeling.</text>
</comment>
<comment type="subcellular location">
    <subcellularLocation>
        <location evidence="1">Cell membrane</location>
        <topology evidence="1">Peripheral membrane protein</topology>
        <orientation evidence="1">Cytoplasmic side</orientation>
    </subcellularLocation>
    <subcellularLocation>
        <location evidence="1">Cytoplasm</location>
        <location evidence="1">Cytoskeleton</location>
    </subcellularLocation>
</comment>
<comment type="similarity">
    <text evidence="5">Belongs to the MRL family.</text>
</comment>
<comment type="sequence caution" evidence="5">
    <conflict type="erroneous initiation">
        <sequence resource="EMBL-CDS" id="AAH77889"/>
    </conflict>
</comment>